<name>AGUA_STRPN</name>
<reference key="1">
    <citation type="journal article" date="2001" name="Science">
        <title>Complete genome sequence of a virulent isolate of Streptococcus pneumoniae.</title>
        <authorList>
            <person name="Tettelin H."/>
            <person name="Nelson K.E."/>
            <person name="Paulsen I.T."/>
            <person name="Eisen J.A."/>
            <person name="Read T.D."/>
            <person name="Peterson S.N."/>
            <person name="Heidelberg J.F."/>
            <person name="DeBoy R.T."/>
            <person name="Haft D.H."/>
            <person name="Dodson R.J."/>
            <person name="Durkin A.S."/>
            <person name="Gwinn M.L."/>
            <person name="Kolonay J.F."/>
            <person name="Nelson W.C."/>
            <person name="Peterson J.D."/>
            <person name="Umayam L.A."/>
            <person name="White O."/>
            <person name="Salzberg S.L."/>
            <person name="Lewis M.R."/>
            <person name="Radune D."/>
            <person name="Holtzapple E.K."/>
            <person name="Khouri H.M."/>
            <person name="Wolf A.M."/>
            <person name="Utterback T.R."/>
            <person name="Hansen C.L."/>
            <person name="McDonald L.A."/>
            <person name="Feldblyum T.V."/>
            <person name="Angiuoli S.V."/>
            <person name="Dickinson T."/>
            <person name="Hickey E.K."/>
            <person name="Holt I.E."/>
            <person name="Loftus B.J."/>
            <person name="Yang F."/>
            <person name="Smith H.O."/>
            <person name="Venter J.C."/>
            <person name="Dougherty B.A."/>
            <person name="Morrison D.A."/>
            <person name="Hollingshead S.K."/>
            <person name="Fraser C.M."/>
        </authorList>
    </citation>
    <scope>NUCLEOTIDE SEQUENCE [LARGE SCALE GENOMIC DNA]</scope>
    <source>
        <strain>ATCC BAA-334 / TIGR4</strain>
    </source>
</reference>
<organism>
    <name type="scientific">Streptococcus pneumoniae serotype 4 (strain ATCC BAA-334 / TIGR4)</name>
    <dbReference type="NCBI Taxonomy" id="170187"/>
    <lineage>
        <taxon>Bacteria</taxon>
        <taxon>Bacillati</taxon>
        <taxon>Bacillota</taxon>
        <taxon>Bacilli</taxon>
        <taxon>Lactobacillales</taxon>
        <taxon>Streptococcaceae</taxon>
        <taxon>Streptococcus</taxon>
    </lineage>
</organism>
<gene>
    <name evidence="1" type="primary">aguA</name>
    <name type="ordered locus">SP_0921</name>
</gene>
<sequence>MMDSPKKLGYHMPAEYEPHHGTLMIWPTRPGSWPFQGKAAKRAFTQIIETIAEGERVYLLVEQAYLSEAQSYLGDKVVYLDIPTNDAWARDTGPTILVNDKGKKLAVDWAFNAWGGTYDGLYQDYEEDDQVASRFAEALERPVYDAKPFVLEGGAIHSDGQGTILVTESCLLSPGRNPNLTKEEIENTLLESLGAEKVIWLPYGIYQDETNEHVDNVAAFVGPAELVLAWTDDENDPQYAMSKADLELLEQETDAKGCHFTIHKLPIPAVRQVVTEEDLPGYIYEEGEEKRYAGERLAASYVNFYIANKAVLVPQFEDVNDQVALDILSKCFPDRKVVGIPARDILLGGGNIHCITQQIPE</sequence>
<evidence type="ECO:0000255" key="1">
    <source>
        <dbReference type="HAMAP-Rule" id="MF_01841"/>
    </source>
</evidence>
<dbReference type="EC" id="3.5.3.12" evidence="1"/>
<dbReference type="EMBL" id="AE005672">
    <property type="protein sequence ID" value="AAK75045.1"/>
    <property type="molecule type" value="Genomic_DNA"/>
</dbReference>
<dbReference type="PIR" id="D95106">
    <property type="entry name" value="D95106"/>
</dbReference>
<dbReference type="RefSeq" id="WP_000969445.1">
    <property type="nucleotide sequence ID" value="NZ_CP155539.1"/>
</dbReference>
<dbReference type="SMR" id="Q97RA4"/>
<dbReference type="PaxDb" id="170187-SP_0921"/>
<dbReference type="EnsemblBacteria" id="AAK75045">
    <property type="protein sequence ID" value="AAK75045"/>
    <property type="gene ID" value="SP_0921"/>
</dbReference>
<dbReference type="KEGG" id="spn:SP_0921"/>
<dbReference type="eggNOG" id="COG2957">
    <property type="taxonomic scope" value="Bacteria"/>
</dbReference>
<dbReference type="PhylomeDB" id="Q97RA4"/>
<dbReference type="BioCyc" id="SPNE170187:G1FZB-948-MONOMER"/>
<dbReference type="Proteomes" id="UP000000585">
    <property type="component" value="Chromosome"/>
</dbReference>
<dbReference type="GO" id="GO:0047632">
    <property type="term" value="F:agmatine deiminase activity"/>
    <property type="evidence" value="ECO:0007669"/>
    <property type="project" value="UniProtKB-UniRule"/>
</dbReference>
<dbReference type="GO" id="GO:0004668">
    <property type="term" value="F:protein-arginine deiminase activity"/>
    <property type="evidence" value="ECO:0007669"/>
    <property type="project" value="InterPro"/>
</dbReference>
<dbReference type="GO" id="GO:0009446">
    <property type="term" value="P:putrescine biosynthetic process"/>
    <property type="evidence" value="ECO:0007669"/>
    <property type="project" value="InterPro"/>
</dbReference>
<dbReference type="Gene3D" id="3.75.10.10">
    <property type="entry name" value="L-arginine/glycine Amidinotransferase, Chain A"/>
    <property type="match status" value="1"/>
</dbReference>
<dbReference type="HAMAP" id="MF_01841">
    <property type="entry name" value="Agmatine_deimin"/>
    <property type="match status" value="1"/>
</dbReference>
<dbReference type="InterPro" id="IPR017754">
    <property type="entry name" value="Agmatine_deiminase"/>
</dbReference>
<dbReference type="InterPro" id="IPR007466">
    <property type="entry name" value="Peptidyl-Arg-deiminase_porph"/>
</dbReference>
<dbReference type="NCBIfam" id="TIGR03380">
    <property type="entry name" value="agmatine_aguA"/>
    <property type="match status" value="1"/>
</dbReference>
<dbReference type="NCBIfam" id="NF010070">
    <property type="entry name" value="PRK13551.1"/>
    <property type="match status" value="1"/>
</dbReference>
<dbReference type="PANTHER" id="PTHR31377">
    <property type="entry name" value="AGMATINE DEIMINASE-RELATED"/>
    <property type="match status" value="1"/>
</dbReference>
<dbReference type="PANTHER" id="PTHR31377:SF0">
    <property type="entry name" value="AGMATINE DEIMINASE-RELATED"/>
    <property type="match status" value="1"/>
</dbReference>
<dbReference type="Pfam" id="PF04371">
    <property type="entry name" value="PAD_porph"/>
    <property type="match status" value="1"/>
</dbReference>
<dbReference type="SUPFAM" id="SSF55909">
    <property type="entry name" value="Pentein"/>
    <property type="match status" value="1"/>
</dbReference>
<proteinExistence type="inferred from homology"/>
<accession>Q97RA4</accession>
<comment type="catalytic activity">
    <reaction evidence="1">
        <text>agmatine + H2O = N-carbamoylputrescine + NH4(+)</text>
        <dbReference type="Rhea" id="RHEA:18037"/>
        <dbReference type="ChEBI" id="CHEBI:15377"/>
        <dbReference type="ChEBI" id="CHEBI:28938"/>
        <dbReference type="ChEBI" id="CHEBI:58145"/>
        <dbReference type="ChEBI" id="CHEBI:58318"/>
        <dbReference type="EC" id="3.5.3.12"/>
    </reaction>
</comment>
<comment type="similarity">
    <text evidence="1">Belongs to the agmatine deiminase family.</text>
</comment>
<keyword id="KW-0378">Hydrolase</keyword>
<keyword id="KW-1185">Reference proteome</keyword>
<protein>
    <recommendedName>
        <fullName evidence="1">Putative agmatine deiminase</fullName>
        <ecNumber evidence="1">3.5.3.12</ecNumber>
    </recommendedName>
    <alternativeName>
        <fullName evidence="1">Agmatine iminohydrolase</fullName>
    </alternativeName>
</protein>
<feature type="chain" id="PRO_0000194345" description="Putative agmatine deiminase">
    <location>
        <begin position="1"/>
        <end position="361"/>
    </location>
</feature>
<feature type="active site" description="Amidino-cysteine intermediate" evidence="1">
    <location>
        <position position="354"/>
    </location>
</feature>